<evidence type="ECO:0000250" key="1"/>
<evidence type="ECO:0000255" key="2">
    <source>
        <dbReference type="PROSITE-ProRule" id="PRU00164"/>
    </source>
</evidence>
<evidence type="ECO:0000256" key="3">
    <source>
        <dbReference type="SAM" id="MobiDB-lite"/>
    </source>
</evidence>
<evidence type="ECO:0000269" key="4">
    <source>
    </source>
</evidence>
<evidence type="ECO:0000305" key="5"/>
<proteinExistence type="evidence at protein level"/>
<keyword id="KW-0963">Cytoplasm</keyword>
<keyword id="KW-0343">GTPase activation</keyword>
<keyword id="KW-0539">Nucleus</keyword>
<keyword id="KW-0653">Protein transport</keyword>
<keyword id="KW-1185">Reference proteome</keyword>
<keyword id="KW-0813">Transport</keyword>
<organism>
    <name type="scientific">Encephalitozoon cuniculi (strain GB-M1)</name>
    <name type="common">Microsporidian parasite</name>
    <dbReference type="NCBI Taxonomy" id="284813"/>
    <lineage>
        <taxon>Eukaryota</taxon>
        <taxon>Fungi</taxon>
        <taxon>Fungi incertae sedis</taxon>
        <taxon>Microsporidia</taxon>
        <taxon>Unikaryonidae</taxon>
        <taxon>Encephalitozoon</taxon>
    </lineage>
</organism>
<comment type="function">
    <text evidence="1">Important for the export of protein containing nuclear export signal (NES) out of the nucleus.</text>
</comment>
<comment type="subcellular location">
    <subcellularLocation>
        <location evidence="1">Cytoplasm</location>
    </subcellularLocation>
    <subcellularLocation>
        <location evidence="1">Nucleus</location>
    </subcellularLocation>
    <text evidence="1">Shuttles between the nucleus and cytoplasm.</text>
</comment>
<comment type="developmental stage">
    <text evidence="4">Expressed in late sporogonial stages.</text>
</comment>
<comment type="similarity">
    <text evidence="5">Belongs to the RANBP1 family.</text>
</comment>
<gene>
    <name type="primary">YRB1</name>
    <name type="ordered locus">ECU02_0140</name>
</gene>
<name>YRB1_ENCCU</name>
<reference key="1">
    <citation type="journal article" date="2001" name="Nature">
        <title>Genome sequence and gene compaction of the eukaryote parasite Encephalitozoon cuniculi.</title>
        <authorList>
            <person name="Katinka M.D."/>
            <person name="Duprat S."/>
            <person name="Cornillot E."/>
            <person name="Metenier G."/>
            <person name="Thomarat F."/>
            <person name="Prensier G."/>
            <person name="Barbe V."/>
            <person name="Peyretaillade E."/>
            <person name="Brottier P."/>
            <person name="Wincker P."/>
            <person name="Delbac F."/>
            <person name="El Alaoui H."/>
            <person name="Peyret P."/>
            <person name="Saurin W."/>
            <person name="Gouy M."/>
            <person name="Weissenbach J."/>
            <person name="Vivares C.P."/>
        </authorList>
    </citation>
    <scope>NUCLEOTIDE SEQUENCE [LARGE SCALE GENOMIC DNA]</scope>
    <source>
        <strain>GB-M1</strain>
    </source>
</reference>
<reference key="2">
    <citation type="journal article" date="2006" name="Proteomics">
        <title>Proteomic analysis of the eukaryotic parasite Encephalitozoon cuniculi (microsporidia): a reference map for proteins expressed in late sporogonial stages.</title>
        <authorList>
            <person name="Brosson D."/>
            <person name="Kuhn L."/>
            <person name="Delbac F."/>
            <person name="Garin J."/>
            <person name="Vivares C.P."/>
            <person name="Texier C."/>
        </authorList>
    </citation>
    <scope>IDENTIFICATION BY MASS SPECTROMETRY [LARGE SCALE ANALYSIS]</scope>
    <scope>DEVELOPMENTAL STAGE</scope>
    <scope>SUBCELLULAR LOCATION</scope>
</reference>
<accession>Q8SSI6</accession>
<feature type="chain" id="PRO_0000382911" description="Ran-specific GTPase-activating protein 1">
    <location>
        <begin position="1"/>
        <end position="219"/>
    </location>
</feature>
<feature type="domain" description="RanBD1" evidence="2">
    <location>
        <begin position="70"/>
        <end position="210"/>
    </location>
</feature>
<feature type="region of interest" description="Disordered" evidence="3">
    <location>
        <begin position="1"/>
        <end position="72"/>
    </location>
</feature>
<feature type="compositionally biased region" description="Basic and acidic residues" evidence="3">
    <location>
        <begin position="1"/>
        <end position="12"/>
    </location>
</feature>
<feature type="compositionally biased region" description="Basic and acidic residues" evidence="3">
    <location>
        <begin position="33"/>
        <end position="45"/>
    </location>
</feature>
<feature type="compositionally biased region" description="Basic and acidic residues" evidence="3">
    <location>
        <begin position="57"/>
        <end position="72"/>
    </location>
</feature>
<dbReference type="EMBL" id="AL590442">
    <property type="protein sequence ID" value="CAD25045.1"/>
    <property type="molecule type" value="Genomic_DNA"/>
</dbReference>
<dbReference type="RefSeq" id="NP_584541.1">
    <property type="nucleotide sequence ID" value="NM_001040730.1"/>
</dbReference>
<dbReference type="SMR" id="Q8SSI6"/>
<dbReference type="FunCoup" id="Q8SSI6">
    <property type="interactions" value="296"/>
</dbReference>
<dbReference type="STRING" id="284813.Q8SSI6"/>
<dbReference type="GeneID" id="858531"/>
<dbReference type="KEGG" id="ecu:ECU02_0140"/>
<dbReference type="VEuPathDB" id="MicrosporidiaDB:ECU02_0140"/>
<dbReference type="HOGENOM" id="CLU_104726_0_0_1"/>
<dbReference type="InParanoid" id="Q8SSI6"/>
<dbReference type="OMA" id="SANTFKE"/>
<dbReference type="OrthoDB" id="2357150at2759"/>
<dbReference type="Proteomes" id="UP000000819">
    <property type="component" value="Chromosome II"/>
</dbReference>
<dbReference type="GO" id="GO:0005737">
    <property type="term" value="C:cytoplasm"/>
    <property type="evidence" value="ECO:0007669"/>
    <property type="project" value="UniProtKB-SubCell"/>
</dbReference>
<dbReference type="GO" id="GO:0005643">
    <property type="term" value="C:nuclear pore"/>
    <property type="evidence" value="ECO:0007669"/>
    <property type="project" value="TreeGrafter"/>
</dbReference>
<dbReference type="GO" id="GO:0005096">
    <property type="term" value="F:GTPase activator activity"/>
    <property type="evidence" value="ECO:0007669"/>
    <property type="project" value="UniProtKB-KW"/>
</dbReference>
<dbReference type="GO" id="GO:0046907">
    <property type="term" value="P:intracellular transport"/>
    <property type="evidence" value="ECO:0007669"/>
    <property type="project" value="InterPro"/>
</dbReference>
<dbReference type="GO" id="GO:0015031">
    <property type="term" value="P:protein transport"/>
    <property type="evidence" value="ECO:0007669"/>
    <property type="project" value="UniProtKB-KW"/>
</dbReference>
<dbReference type="CDD" id="cd00835">
    <property type="entry name" value="RanBD_family"/>
    <property type="match status" value="1"/>
</dbReference>
<dbReference type="Gene3D" id="2.30.29.30">
    <property type="entry name" value="Pleckstrin-homology domain (PH domain)/Phosphotyrosine-binding domain (PTB)"/>
    <property type="match status" value="1"/>
</dbReference>
<dbReference type="InterPro" id="IPR011993">
    <property type="entry name" value="PH-like_dom_sf"/>
</dbReference>
<dbReference type="InterPro" id="IPR000156">
    <property type="entry name" value="Ran_bind_dom"/>
</dbReference>
<dbReference type="InterPro" id="IPR045255">
    <property type="entry name" value="RanBP1-like"/>
</dbReference>
<dbReference type="PANTHER" id="PTHR23138:SF87">
    <property type="entry name" value="E3 SUMO-PROTEIN LIGASE RANBP2"/>
    <property type="match status" value="1"/>
</dbReference>
<dbReference type="PANTHER" id="PTHR23138">
    <property type="entry name" value="RAN BINDING PROTEIN"/>
    <property type="match status" value="1"/>
</dbReference>
<dbReference type="Pfam" id="PF00638">
    <property type="entry name" value="Ran_BP1"/>
    <property type="match status" value="1"/>
</dbReference>
<dbReference type="SMART" id="SM00160">
    <property type="entry name" value="RanBD"/>
    <property type="match status" value="1"/>
</dbReference>
<dbReference type="SUPFAM" id="SSF50729">
    <property type="entry name" value="PH domain-like"/>
    <property type="match status" value="1"/>
</dbReference>
<dbReference type="PROSITE" id="PS50196">
    <property type="entry name" value="RANBD1"/>
    <property type="match status" value="1"/>
</dbReference>
<sequence>MAEVERKEEQAKIESGSNEQKERGLDGVNKGDAVGDGKEGGEAKKVQQSPFLTNAVPRKDEGKGGEERDNIDAAEVVEKQRKHLEENQSDEILFKARCKLYYFSEETKALEERAEGTMIIEMHSKSNLAKITMFRDQIGRLGCNHFINPRFKAQPHGKVSNGWMWMSTEDTVETDALRKKIQLFVVKFYSEEDFKRFGEEYDLGRAHNEKALKTKTNKK</sequence>
<protein>
    <recommendedName>
        <fullName>Ran-specific GTPase-activating protein 1</fullName>
    </recommendedName>
    <alternativeName>
        <fullName>Ran-binding protein 1</fullName>
        <shortName>RANBP1</shortName>
    </alternativeName>
</protein>